<proteinExistence type="evidence at protein level"/>
<comment type="function">
    <text evidence="5">Inhibits the enzymatic activity of the acidic phospholipase A2 (PLA2).</text>
</comment>
<comment type="subunit">
    <text evidence="1">Homotrimer; non-covalently linked.</text>
</comment>
<comment type="subcellular location">
    <subcellularLocation>
        <location evidence="4">Secreted</location>
    </subcellularLocation>
    <text evidence="4">Secreted in plasma.</text>
</comment>
<comment type="tissue specificity">
    <text evidence="4">Expressed by the liver.</text>
</comment>
<comment type="PTM">
    <text evidence="4">Glycosylated.</text>
</comment>
<comment type="similarity">
    <text evidence="6">Belongs to the alpha-type phospholipase A2 inhibitor family.</text>
</comment>
<reference key="1">
    <citation type="journal article" date="1993" name="J. Biochem.">
        <title>Isolation and amino acid sequence of a phospholipase A2 inhibitor from the blood plasma of Agkistrodon blomhoffii siniticus.</title>
        <authorList>
            <person name="Ohkura N."/>
            <person name="Inoue S."/>
            <person name="Ikeda K."/>
            <person name="Hayashi K."/>
        </authorList>
    </citation>
    <scope>PROTEIN SEQUENCE</scope>
    <scope>GLYCOSYLATION AT ASN-103</scope>
    <scope>SUBCELLULAR LOCATION</scope>
    <source>
        <tissue>Plasma</tissue>
    </source>
</reference>
<reference key="2">
    <citation type="journal article" date="1997" name="Biochem. J.">
        <title>Purification and characterization of three distinct types of phospholipase A2 inhibitors from the blood plasma of the Chinese mamushi, Agkistrodon blomhoffii siniticus.</title>
        <authorList>
            <person name="Ohkura N."/>
            <person name="Okuhara H."/>
            <person name="Inoue S."/>
            <person name="Ikeda K."/>
            <person name="Hayashi K."/>
        </authorList>
    </citation>
    <scope>CHARACTERIZATION</scope>
    <scope>FUNCTION</scope>
    <source>
        <tissue>Plasma</tissue>
    </source>
</reference>
<evidence type="ECO:0000250" key="1">
    <source>
        <dbReference type="UniProtKB" id="A1XRN2"/>
    </source>
</evidence>
<evidence type="ECO:0000250" key="2">
    <source>
        <dbReference type="UniProtKB" id="P21755"/>
    </source>
</evidence>
<evidence type="ECO:0000255" key="3">
    <source>
        <dbReference type="PROSITE-ProRule" id="PRU00040"/>
    </source>
</evidence>
<evidence type="ECO:0000269" key="4">
    <source>
    </source>
</evidence>
<evidence type="ECO:0000269" key="5">
    <source>
    </source>
</evidence>
<evidence type="ECO:0000305" key="6"/>
<organism>
    <name type="scientific">Gloydius brevicaudus siniticus</name>
    <name type="common">Chinese mamushi</name>
    <name type="synonym">Agkistrodon blomhoffii siniticus</name>
    <dbReference type="NCBI Taxonomy" id="31147"/>
    <lineage>
        <taxon>Eukaryota</taxon>
        <taxon>Metazoa</taxon>
        <taxon>Chordata</taxon>
        <taxon>Craniata</taxon>
        <taxon>Vertebrata</taxon>
        <taxon>Euteleostomi</taxon>
        <taxon>Lepidosauria</taxon>
        <taxon>Squamata</taxon>
        <taxon>Bifurcata</taxon>
        <taxon>Unidentata</taxon>
        <taxon>Episquamata</taxon>
        <taxon>Toxicofera</taxon>
        <taxon>Serpentes</taxon>
        <taxon>Colubroidea</taxon>
        <taxon>Viperidae</taxon>
        <taxon>Crotalinae</taxon>
        <taxon>Gloydius</taxon>
        <taxon>Gloydius brevicauda</taxon>
    </lineage>
</organism>
<sequence length="147" mass="16449">HETDPDGHVLNSLMLIVMKFQREFSNLKDAFMTVHKARSFGSGSERLYVTNKEVGNFEGLGEICRQAGGRIPSPQLKNQNKAFANVLERHNKEAYLVVGNSANFTNWAEGQPKKADGTCVKADTHGLWHSTSCDDNLLVVCEFYFIL</sequence>
<dbReference type="PIR" id="JX0261">
    <property type="entry name" value="JX0261"/>
</dbReference>
<dbReference type="SMR" id="P82142"/>
<dbReference type="iPTMnet" id="P82142"/>
<dbReference type="GO" id="GO:0005576">
    <property type="term" value="C:extracellular region"/>
    <property type="evidence" value="ECO:0007669"/>
    <property type="project" value="UniProtKB-SubCell"/>
</dbReference>
<dbReference type="GO" id="GO:0030246">
    <property type="term" value="F:carbohydrate binding"/>
    <property type="evidence" value="ECO:0007669"/>
    <property type="project" value="UniProtKB-KW"/>
</dbReference>
<dbReference type="GO" id="GO:0019834">
    <property type="term" value="F:phospholipase A2 inhibitor activity"/>
    <property type="evidence" value="ECO:0007669"/>
    <property type="project" value="UniProtKB-KW"/>
</dbReference>
<dbReference type="Gene3D" id="3.10.100.10">
    <property type="entry name" value="Mannose-Binding Protein A, subunit A"/>
    <property type="match status" value="1"/>
</dbReference>
<dbReference type="InterPro" id="IPR001304">
    <property type="entry name" value="C-type_lectin-like"/>
</dbReference>
<dbReference type="InterPro" id="IPR016186">
    <property type="entry name" value="C-type_lectin-like/link_sf"/>
</dbReference>
<dbReference type="InterPro" id="IPR018378">
    <property type="entry name" value="C-type_lectin_CS"/>
</dbReference>
<dbReference type="InterPro" id="IPR016187">
    <property type="entry name" value="CTDL_fold"/>
</dbReference>
<dbReference type="Pfam" id="PF00059">
    <property type="entry name" value="Lectin_C"/>
    <property type="match status" value="1"/>
</dbReference>
<dbReference type="SUPFAM" id="SSF56436">
    <property type="entry name" value="C-type lectin-like"/>
    <property type="match status" value="1"/>
</dbReference>
<dbReference type="PROSITE" id="PS00615">
    <property type="entry name" value="C_TYPE_LECTIN_1"/>
    <property type="match status" value="1"/>
</dbReference>
<dbReference type="PROSITE" id="PS50041">
    <property type="entry name" value="C_TYPE_LECTIN_2"/>
    <property type="match status" value="1"/>
</dbReference>
<keyword id="KW-0903">Direct protein sequencing</keyword>
<keyword id="KW-1015">Disulfide bond</keyword>
<keyword id="KW-0325">Glycoprotein</keyword>
<keyword id="KW-0430">Lectin</keyword>
<keyword id="KW-0593">Phospholipase A2 inhibitor</keyword>
<keyword id="KW-0964">Secreted</keyword>
<accession>P82142</accession>
<feature type="chain" id="PRO_0000046705" description="Phospholipase A2 inhibitor subunit A">
    <location>
        <begin position="1"/>
        <end position="147"/>
    </location>
</feature>
<feature type="domain" description="C-type lectin" evidence="3">
    <location>
        <begin position="62"/>
        <end position="143"/>
    </location>
</feature>
<feature type="glycosylation site" description="N-linked (GlcNAc...) asparagine" evidence="4">
    <location>
        <position position="103"/>
    </location>
</feature>
<feature type="disulfide bond" evidence="2">
    <location>
        <begin position="64"/>
        <end position="141"/>
    </location>
</feature>
<feature type="disulfide bond" evidence="2">
    <location>
        <begin position="119"/>
        <end position="133"/>
    </location>
</feature>
<name>PLIAA_GLOBS</name>
<protein>
    <recommendedName>
        <fullName>Phospholipase A2 inhibitor subunit A</fullName>
        <shortName>alpha-PLI A</shortName>
    </recommendedName>
</protein>